<keyword id="KW-0002">3D-structure</keyword>
<keyword id="KW-0025">Alternative splicing</keyword>
<keyword id="KW-0156">Chromatin regulator</keyword>
<keyword id="KW-0539">Nucleus</keyword>
<keyword id="KW-0597">Phosphoprotein</keyword>
<keyword id="KW-1267">Proteomics identification</keyword>
<keyword id="KW-1185">Reference proteome</keyword>
<keyword id="KW-0677">Repeat</keyword>
<keyword id="KW-0678">Repressor</keyword>
<keyword id="KW-0804">Transcription</keyword>
<keyword id="KW-0805">Transcription regulation</keyword>
<keyword id="KW-0832">Ubl conjugation</keyword>
<keyword id="KW-0853">WD repeat</keyword>
<accession>P54198</accession>
<accession>Q05BU9</accession>
<accession>Q8IXN2</accession>
<protein>
    <recommendedName>
        <fullName>Protein HIRA</fullName>
    </recommendedName>
    <alternativeName>
        <fullName>TUP1-like enhancer of split protein 1</fullName>
    </alternativeName>
</protein>
<comment type="function">
    <text evidence="5 7 9">Cooperates with ASF1A to promote replication-independent chromatin assembly. Required for the periodic repression of histone gene transcription during the cell cycle. Required for the formation of senescence-associated heterochromatin foci (SAHF) and efficient senescence-associated cell cycle exit.</text>
</comment>
<comment type="subunit">
    <text evidence="2 4 6 7 9 10 11 12 14">Interacts with histone H3-3B, PAX3 and PAX7 (By similarity). Interacts with histone H3.Y (PubMed:28334823). Interacts with CCNA1, HIRIP3, NFU1/HIRIP5 and histone H2B. Part of a complex which includes ASF1A, CABIN1, histone H3.3, histone H4 and UBN1 (PubMed:11238922, PubMed:14680630, PubMed:14718166, PubMed:15621527, PubMed:16980972, PubMed:19029251, PubMed:9710638).</text>
</comment>
<comment type="interaction">
    <interactant intactId="EBI-372342">
        <id>P54198</id>
    </interactant>
    <interactant intactId="EBI-749553">
        <id>Q9Y294</id>
        <label>ASF1A</label>
    </interactant>
    <organismsDiffer>false</organismsDiffer>
    <experiments>16</experiments>
</comment>
<comment type="interaction">
    <interactant intactId="EBI-372342">
        <id>P54198</id>
    </interactant>
    <interactant intactId="EBI-1055650">
        <id>Q9NVP2</id>
        <label>ASF1B</label>
    </interactant>
    <organismsDiffer>false</organismsDiffer>
    <experiments>6</experiments>
</comment>
<comment type="interaction">
    <interactant intactId="EBI-372342">
        <id>P54198</id>
    </interactant>
    <interactant intactId="EBI-2880187">
        <id>Q9NPG3</id>
        <label>UBN1</label>
    </interactant>
    <organismsDiffer>false</organismsDiffer>
    <experiments>11</experiments>
</comment>
<comment type="interaction">
    <interactant intactId="EBI-372342">
        <id>P54198</id>
    </interactant>
    <interactant intactId="EBI-9661773">
        <id>Q6ZU65</id>
        <label>UBN2</label>
    </interactant>
    <organismsDiffer>false</organismsDiffer>
    <experiments>2</experiments>
</comment>
<comment type="subcellular location">
    <subcellularLocation>
        <location>Nucleus</location>
    </subcellularLocation>
    <subcellularLocation>
        <location>Nucleus</location>
        <location>PML body</location>
    </subcellularLocation>
    <text>Primarily, though not exclusively, localized to the nucleus. Localizes to PML bodies immediately prior to onset of senescence.</text>
</comment>
<comment type="alternative products">
    <event type="alternative splicing"/>
    <isoform>
        <id>P54198-1</id>
        <name>Long</name>
        <sequence type="displayed"/>
    </isoform>
    <isoform>
        <id>P54198-2</id>
        <name>Short</name>
        <sequence type="described" ref="VSP_006772"/>
    </isoform>
</comment>
<comment type="tissue specificity">
    <text evidence="13">Expressed at high levels in kidney, pancreas and skeletal muscle and at lower levels in brain, heart, liver, lung, and placenta.</text>
</comment>
<comment type="developmental stage">
    <text>Expressed during embryogenesis.</text>
</comment>
<comment type="PTM">
    <text evidence="8">Sumoylated.</text>
</comment>
<comment type="PTM">
    <text evidence="4">Phosphorylated by CDK2/CCNA1 and CDK2/CCNE1 on Thr-555 in vitro. Also phosphorylated on Thr-555 and Ser-687 in vivo.</text>
</comment>
<comment type="similarity">
    <text evidence="16">Belongs to the WD repeat HIR1 family.</text>
</comment>
<comment type="sequence caution" evidence="16">
    <conflict type="erroneous initiation">
        <sequence resource="EMBL-CDS" id="CAA53044"/>
    </conflict>
</comment>
<comment type="sequence caution" evidence="16">
    <conflict type="erroneous initiation">
        <sequence resource="EMBL-CDS" id="CAA54721"/>
    </conflict>
</comment>
<comment type="sequence caution" evidence="16">
    <conflict type="erroneous initiation">
        <sequence resource="EMBL-CDS" id="CAA57436"/>
    </conflict>
</comment>
<evidence type="ECO:0000250" key="1"/>
<evidence type="ECO:0000250" key="2">
    <source>
        <dbReference type="UniProtKB" id="Q61666"/>
    </source>
</evidence>
<evidence type="ECO:0000256" key="3">
    <source>
        <dbReference type="SAM" id="MobiDB-lite"/>
    </source>
</evidence>
<evidence type="ECO:0000269" key="4">
    <source>
    </source>
</evidence>
<evidence type="ECO:0000269" key="5">
    <source>
    </source>
</evidence>
<evidence type="ECO:0000269" key="6">
    <source>
    </source>
</evidence>
<evidence type="ECO:0000269" key="7">
    <source>
    </source>
</evidence>
<evidence type="ECO:0000269" key="8">
    <source>
    </source>
</evidence>
<evidence type="ECO:0000269" key="9">
    <source>
    </source>
</evidence>
<evidence type="ECO:0000269" key="10">
    <source>
    </source>
</evidence>
<evidence type="ECO:0000269" key="11">
    <source>
    </source>
</evidence>
<evidence type="ECO:0000269" key="12">
    <source>
    </source>
</evidence>
<evidence type="ECO:0000269" key="13">
    <source>
    </source>
</evidence>
<evidence type="ECO:0000269" key="14">
    <source>
    </source>
</evidence>
<evidence type="ECO:0000303" key="15">
    <source>
    </source>
</evidence>
<evidence type="ECO:0000305" key="16"/>
<evidence type="ECO:0007744" key="17">
    <source>
    </source>
</evidence>
<evidence type="ECO:0007744" key="18">
    <source>
    </source>
</evidence>
<evidence type="ECO:0007744" key="19">
    <source>
    </source>
</evidence>
<evidence type="ECO:0007744" key="20">
    <source>
    </source>
</evidence>
<evidence type="ECO:0007744" key="21">
    <source>
    </source>
</evidence>
<evidence type="ECO:0007829" key="22">
    <source>
        <dbReference type="PDB" id="2I32"/>
    </source>
</evidence>
<evidence type="ECO:0007829" key="23">
    <source>
        <dbReference type="PDB" id="5YJE"/>
    </source>
</evidence>
<organism>
    <name type="scientific">Homo sapiens</name>
    <name type="common">Human</name>
    <dbReference type="NCBI Taxonomy" id="9606"/>
    <lineage>
        <taxon>Eukaryota</taxon>
        <taxon>Metazoa</taxon>
        <taxon>Chordata</taxon>
        <taxon>Craniata</taxon>
        <taxon>Vertebrata</taxon>
        <taxon>Euteleostomi</taxon>
        <taxon>Mammalia</taxon>
        <taxon>Eutheria</taxon>
        <taxon>Euarchontoglires</taxon>
        <taxon>Primates</taxon>
        <taxon>Haplorrhini</taxon>
        <taxon>Catarrhini</taxon>
        <taxon>Hominidae</taxon>
        <taxon>Homo</taxon>
    </lineage>
</organism>
<gene>
    <name type="primary">HIRA</name>
    <name type="synonym">DGCR1</name>
    <name type="synonym">HIR</name>
    <name type="synonym">TUPLE1</name>
</gene>
<sequence>MKLLKPTWVNHNGKPIFSVDIHPDGTKFATGGQGQDSGKVVIWNMSPVLQEDDEKDENIPKMLCQMDNHLACVNCVRWSNSGMYLASGGDDKLIMVWKRATYIGPSTVFGSSGKLANVEQWRCVSILRNHSGDVMDVAWSPHDAWLASCSVDNTVVIWNAVKFPEILATLRGHSGLVKGLTWDPVGKYIASQADDRSLKVWRTLDWQLETSITKPFDECGGTTHVLRLSWSPDGHYLVSAHAMNNSGPTAQIIEREGWKTNMDFVGHRKAVTVVKFNPKIFKKKQKNGSSAKPSCPYCCCAVGSKDRSLSVWLTCLKRPLVVIHELFDKSIMDISWTLNGLGILVCSMDGSVAFLDFSQDELGDPLSEEEKSRIHQSTYGKSLAIMTEAQLSTAVIENPEMLKYQRRQQQQQLDQKSAATREMGSATSVAGVVNGESLEDIRKNLLKKQVETRTADGRRRITPLCIAQLDTGDFSTAFFNSIPLSGSLAGTMLSSHSSPQLLPLDSSTPNSFGASKPCTEPVVAASARPAGDSVNKDSMNATSTPAALSPSVLTTPSKIEPMKAFDSRFTERSKATPGAPALTSMTPTAVERLKEQNLVKELRPRDLLESSSDSDEKVPLAKASSLSKRKLELEVETVEKKKKGRPRKDSRLMPVSLSVQSPAALTAEKEAMCLSAPALALKLPIPSPQRAFTLQVSSDPSMYIEVENEVTVVGGVKLSRLKCNREGKEWETVLTSRILTAAGSCDVVCVACEKRMLSVFSTCGRRLLSPILLPSPISTLHCTGSYVMALTAAATLSVWDVHRQVVVVKEESLHSILAGSDMTVSQILLTQHGIPVMNLSDGKAYCFNPSLSTWNLVSDKQDSLAQCADFRSSLPSQDAMLCSGPLAIIQGRTSNSGRQAARLFSVPHVVQQETTLAYLENQVAAALTLQSSHEYRHWLLVYARYLVNEGFEYRLREICKDLLGPVHYSTGSQWESTVVGLRKRELLKELLPVIGQNLRFQRLFTECQEQLDILRDK</sequence>
<name>HIRA_HUMAN</name>
<feature type="chain" id="PRO_0000051019" description="Protein HIRA">
    <location>
        <begin position="1"/>
        <end position="1017"/>
    </location>
</feature>
<feature type="repeat" description="WD 1">
    <location>
        <begin position="11"/>
        <end position="53"/>
    </location>
</feature>
<feature type="repeat" description="WD 2">
    <location>
        <begin position="68"/>
        <end position="107"/>
    </location>
</feature>
<feature type="repeat" description="WD 3">
    <location>
        <begin position="129"/>
        <end position="168"/>
    </location>
</feature>
<feature type="repeat" description="WD 4">
    <location>
        <begin position="172"/>
        <end position="211"/>
    </location>
</feature>
<feature type="repeat" description="WD 5">
    <location>
        <begin position="220"/>
        <end position="263"/>
    </location>
</feature>
<feature type="repeat" description="WD 6">
    <location>
        <begin position="266"/>
        <end position="322"/>
    </location>
</feature>
<feature type="repeat" description="WD 7">
    <location>
        <begin position="326"/>
        <end position="367"/>
    </location>
</feature>
<feature type="region of interest" description="Interaction with CCNA1" evidence="4">
    <location>
        <begin position="421"/>
        <end position="729"/>
    </location>
</feature>
<feature type="region of interest" description="Interaction with ASF1A">
    <location>
        <begin position="421"/>
        <end position="479"/>
    </location>
</feature>
<feature type="region of interest" description="Required for repression of histone gene transcription">
    <location>
        <begin position="439"/>
        <end position="475"/>
    </location>
</feature>
<feature type="region of interest" description="Disordered" evidence="3">
    <location>
        <begin position="494"/>
        <end position="555"/>
    </location>
</feature>
<feature type="region of interest" description="Disordered" evidence="3">
    <location>
        <begin position="570"/>
        <end position="589"/>
    </location>
</feature>
<feature type="region of interest" description="Interaction with histone H2B">
    <location>
        <begin position="593"/>
        <end position="826"/>
    </location>
</feature>
<feature type="region of interest" description="Interaction with PAX3" evidence="1">
    <location>
        <begin position="594"/>
        <end position="739"/>
    </location>
</feature>
<feature type="region of interest" description="Disordered" evidence="3">
    <location>
        <begin position="604"/>
        <end position="625"/>
    </location>
</feature>
<feature type="region of interest" description="Interaction with histone H4">
    <location>
        <begin position="738"/>
        <end position="1017"/>
    </location>
</feature>
<feature type="region of interest" description="Interaction with PAX3" evidence="1">
    <location>
        <begin position="740"/>
        <end position="828"/>
    </location>
</feature>
<feature type="compositionally biased region" description="Low complexity" evidence="3">
    <location>
        <begin position="494"/>
        <end position="509"/>
    </location>
</feature>
<feature type="compositionally biased region" description="Polar residues" evidence="3">
    <location>
        <begin position="536"/>
        <end position="555"/>
    </location>
</feature>
<feature type="compositionally biased region" description="Basic and acidic residues" evidence="3">
    <location>
        <begin position="604"/>
        <end position="619"/>
    </location>
</feature>
<feature type="modified residue" description="Phosphoserine" evidence="21">
    <location>
        <position position="111"/>
    </location>
</feature>
<feature type="modified residue" description="Phosphoserine" evidence="18 21">
    <location>
        <position position="549"/>
    </location>
</feature>
<feature type="modified residue" description="Phosphothreonine; by CDK2" evidence="4">
    <location>
        <position position="555"/>
    </location>
</feature>
<feature type="modified residue" description="Phosphoserine" evidence="18">
    <location>
        <position position="557"/>
    </location>
</feature>
<feature type="modified residue" description="Phosphothreonine" evidence="18">
    <location>
        <position position="576"/>
    </location>
</feature>
<feature type="modified residue" description="Phosphoserine" evidence="17 21">
    <location>
        <position position="584"/>
    </location>
</feature>
<feature type="modified residue" description="Phosphothreonine" evidence="17 18 19 21">
    <location>
        <position position="586"/>
    </location>
</feature>
<feature type="modified residue" description="Phosphoserine" evidence="20">
    <location>
        <position position="610"/>
    </location>
</feature>
<feature type="modified residue" description="Phosphoserine" evidence="20">
    <location>
        <position position="611"/>
    </location>
</feature>
<feature type="modified residue" description="Phosphoserine" evidence="20 21">
    <location>
        <position position="612"/>
    </location>
</feature>
<feature type="modified residue" description="Phosphoserine" evidence="20">
    <location>
        <position position="614"/>
    </location>
</feature>
<feature type="modified residue" description="Phosphoserine" evidence="19 20 21">
    <location>
        <position position="661"/>
    </location>
</feature>
<feature type="modified residue" description="Phosphoserine" evidence="21">
    <location>
        <position position="675"/>
    </location>
</feature>
<feature type="modified residue" description="Phosphoserine" evidence="4">
    <location>
        <position position="687"/>
    </location>
</feature>
<feature type="splice variant" id="VSP_006772" description="In isoform Short." evidence="15">
    <location>
        <begin position="593"/>
        <end position="799"/>
    </location>
</feature>
<feature type="mutagenesis site" description="Impairs binding to ASF1A." evidence="10">
    <location>
        <begin position="449"/>
        <end position="458"/>
    </location>
</feature>
<feature type="mutagenesis site" description="Abrogates binding to ASF1A.">
    <original>RRR</original>
    <variation>AKK</variation>
    <location>
        <begin position="458"/>
        <end position="460"/>
    </location>
</feature>
<feature type="mutagenesis site" description="Impairs binding to ASF1A.">
    <original>RRR</original>
    <variation>KKK</variation>
    <location>
        <begin position="458"/>
        <end position="460"/>
    </location>
</feature>
<feature type="mutagenesis site" description="Impairs binding to ASF1A.">
    <original>RR</original>
    <variation>AK</variation>
    <location>
        <begin position="458"/>
        <end position="459"/>
    </location>
</feature>
<feature type="mutagenesis site" description="Impairs binding to ASF1A.">
    <original>R</original>
    <variation>A</variation>
    <location>
        <position position="458"/>
    </location>
</feature>
<feature type="mutagenesis site" description="Impairs binding to ASF1A; when associated with K-460.">
    <original>R</original>
    <variation>K</variation>
    <location>
        <position position="458"/>
    </location>
</feature>
<feature type="mutagenesis site" description="Abrogates binding to ASF1A." evidence="10">
    <location>
        <begin position="459"/>
        <end position="468"/>
    </location>
</feature>
<feature type="mutagenesis site" description="Abrogates binding to ASF1A." evidence="10">
    <original>R</original>
    <variation>A</variation>
    <location>
        <position position="459"/>
    </location>
</feature>
<feature type="mutagenesis site" description="Abrogates binding to ASF1A." evidence="10">
    <original>R</original>
    <variation>A</variation>
    <location>
        <position position="460"/>
    </location>
</feature>
<feature type="mutagenesis site" description="Impairs binding to ASF1A; when associated with K-458." evidence="10">
    <original>R</original>
    <variation>K</variation>
    <location>
        <position position="460"/>
    </location>
</feature>
<feature type="mutagenesis site" description="Abrogates binding to ASF1A." evidence="10">
    <original>I</original>
    <variation>D</variation>
    <location>
        <position position="461"/>
    </location>
</feature>
<feature type="mutagenesis site" description="Impairs binding to ASF1A." evidence="10">
    <original>L</original>
    <variation>D</variation>
    <location>
        <position position="464"/>
    </location>
</feature>
<feature type="mutagenesis site" description="Impairs binding to ASF1A." evidence="10">
    <original>I</original>
    <variation>D</variation>
    <location>
        <position position="466"/>
    </location>
</feature>
<feature type="mutagenesis site" description="Impairs phosphorylation by CDK2." evidence="4">
    <original>T</original>
    <variation>A</variation>
    <location>
        <position position="555"/>
    </location>
</feature>
<feature type="mutagenesis site" description="Impairs binding to CCNA1 and phosphorylation by CDK2." evidence="4">
    <original>KRKL</original>
    <variation>AAAA</variation>
    <location>
        <begin position="628"/>
        <end position="631"/>
    </location>
</feature>
<feature type="sequence conflict" description="In Ref. 1; CAA54721." evidence="16" ref="1">
    <original>V</original>
    <variation>G</variation>
    <location>
        <position position="9"/>
    </location>
</feature>
<feature type="sequence conflict" description="In Ref. 1; CAA54721/CAA57436 and 2; CAA61979." evidence="16" ref="1 2">
    <original>I</original>
    <variation>N</variation>
    <location>
        <position position="889"/>
    </location>
</feature>
<feature type="sequence conflict" description="In Ref. 5; CAA53044." evidence="16" ref="5">
    <original>L</original>
    <variation>M</variation>
    <location>
        <position position="990"/>
    </location>
</feature>
<feature type="strand" evidence="22">
    <location>
        <begin position="450"/>
        <end position="453"/>
    </location>
</feature>
<feature type="strand" evidence="22">
    <location>
        <begin position="459"/>
        <end position="462"/>
    </location>
</feature>
<feature type="strand" evidence="23">
    <location>
        <begin position="690"/>
        <end position="695"/>
    </location>
</feature>
<feature type="strand" evidence="23">
    <location>
        <begin position="702"/>
        <end position="713"/>
    </location>
</feature>
<feature type="strand" evidence="23">
    <location>
        <begin position="716"/>
        <end position="725"/>
    </location>
</feature>
<feature type="strand" evidence="23">
    <location>
        <begin position="728"/>
        <end position="736"/>
    </location>
</feature>
<feature type="strand" evidence="23">
    <location>
        <begin position="738"/>
        <end position="743"/>
    </location>
</feature>
<feature type="strand" evidence="23">
    <location>
        <begin position="745"/>
        <end position="752"/>
    </location>
</feature>
<feature type="turn" evidence="23">
    <location>
        <begin position="753"/>
        <end position="755"/>
    </location>
</feature>
<feature type="strand" evidence="23">
    <location>
        <begin position="756"/>
        <end position="761"/>
    </location>
</feature>
<feature type="strand" evidence="23">
    <location>
        <begin position="766"/>
        <end position="772"/>
    </location>
</feature>
<feature type="strand" evidence="23">
    <location>
        <begin position="777"/>
        <end position="783"/>
    </location>
</feature>
<feature type="strand" evidence="23">
    <location>
        <begin position="786"/>
        <end position="791"/>
    </location>
</feature>
<feature type="strand" evidence="23">
    <location>
        <begin position="794"/>
        <end position="800"/>
    </location>
</feature>
<feature type="turn" evidence="23">
    <location>
        <begin position="801"/>
        <end position="804"/>
    </location>
</feature>
<feature type="strand" evidence="23">
    <location>
        <begin position="805"/>
        <end position="813"/>
    </location>
</feature>
<feature type="helix" evidence="23">
    <location>
        <begin position="814"/>
        <end position="817"/>
    </location>
</feature>
<feature type="strand" evidence="23">
    <location>
        <begin position="824"/>
        <end position="829"/>
    </location>
</feature>
<feature type="strand" evidence="23">
    <location>
        <begin position="835"/>
        <end position="839"/>
    </location>
</feature>
<feature type="strand" evidence="23">
    <location>
        <begin position="842"/>
        <end position="848"/>
    </location>
</feature>
<feature type="turn" evidence="23">
    <location>
        <begin position="849"/>
        <end position="852"/>
    </location>
</feature>
<feature type="strand" evidence="23">
    <location>
        <begin position="853"/>
        <end position="859"/>
    </location>
</feature>
<feature type="helix" evidence="23">
    <location>
        <begin position="860"/>
        <end position="862"/>
    </location>
</feature>
<feature type="turn" evidence="23">
    <location>
        <begin position="865"/>
        <end position="867"/>
    </location>
</feature>
<feature type="helix" evidence="23">
    <location>
        <begin position="885"/>
        <end position="890"/>
    </location>
</feature>
<feature type="strand" evidence="23">
    <location>
        <begin position="904"/>
        <end position="906"/>
    </location>
</feature>
<feature type="helix" evidence="23">
    <location>
        <begin position="908"/>
        <end position="928"/>
    </location>
</feature>
<feature type="helix" evidence="23">
    <location>
        <begin position="932"/>
        <end position="949"/>
    </location>
</feature>
<feature type="helix" evidence="23">
    <location>
        <begin position="952"/>
        <end position="963"/>
    </location>
</feature>
<feature type="strand" evidence="23">
    <location>
        <begin position="976"/>
        <end position="978"/>
    </location>
</feature>
<feature type="helix" evidence="23">
    <location>
        <begin position="983"/>
        <end position="995"/>
    </location>
</feature>
<feature type="helix" evidence="23">
    <location>
        <begin position="998"/>
        <end position="1000"/>
    </location>
</feature>
<feature type="helix" evidence="23">
    <location>
        <begin position="1001"/>
        <end position="1015"/>
    </location>
</feature>
<dbReference type="EMBL" id="X81844">
    <property type="protein sequence ID" value="CAA57436.1"/>
    <property type="status" value="ALT_INIT"/>
    <property type="molecule type" value="mRNA"/>
</dbReference>
<dbReference type="EMBL" id="X77633">
    <property type="protein sequence ID" value="CAA54721.1"/>
    <property type="status" value="ALT_INIT"/>
    <property type="molecule type" value="mRNA"/>
</dbReference>
<dbReference type="EMBL" id="X89887">
    <property type="protein sequence ID" value="CAA61979.1"/>
    <property type="molecule type" value="mRNA"/>
</dbReference>
<dbReference type="EMBL" id="X91501">
    <property type="protein sequence ID" value="CAA62800.1"/>
    <property type="molecule type" value="Genomic_DNA"/>
</dbReference>
<dbReference type="EMBL" id="CR456503">
    <property type="protein sequence ID" value="CAG30389.1"/>
    <property type="molecule type" value="mRNA"/>
</dbReference>
<dbReference type="EMBL" id="BC032721">
    <property type="protein sequence ID" value="AAH32721.1"/>
    <property type="molecule type" value="mRNA"/>
</dbReference>
<dbReference type="EMBL" id="BC039835">
    <property type="protein sequence ID" value="AAH39835.1"/>
    <property type="molecule type" value="mRNA"/>
</dbReference>
<dbReference type="EMBL" id="X75296">
    <property type="protein sequence ID" value="CAA53044.1"/>
    <property type="status" value="ALT_INIT"/>
    <property type="molecule type" value="mRNA"/>
</dbReference>
<dbReference type="CCDS" id="CCDS13759.1">
    <molecule id="P54198-1"/>
</dbReference>
<dbReference type="PIR" id="I37465">
    <property type="entry name" value="I37465"/>
</dbReference>
<dbReference type="PIR" id="S45344">
    <property type="entry name" value="S45344"/>
</dbReference>
<dbReference type="RefSeq" id="NP_003316.3">
    <molecule id="P54198-1"/>
    <property type="nucleotide sequence ID" value="NM_003325.3"/>
</dbReference>
<dbReference type="PDB" id="2I32">
    <property type="method" value="X-ray"/>
    <property type="resolution" value="2.70 A"/>
    <property type="chains" value="E/F=425-472"/>
</dbReference>
<dbReference type="PDB" id="5YJE">
    <property type="method" value="X-ray"/>
    <property type="resolution" value="2.45 A"/>
    <property type="chains" value="A/B/C=644-1017"/>
</dbReference>
<dbReference type="PDBsum" id="2I32"/>
<dbReference type="PDBsum" id="5YJE"/>
<dbReference type="SMR" id="P54198"/>
<dbReference type="BioGRID" id="113141">
    <property type="interactions" value="156"/>
</dbReference>
<dbReference type="CORUM" id="P54198"/>
<dbReference type="DIP" id="DIP-29240N"/>
<dbReference type="ELM" id="P54198"/>
<dbReference type="FunCoup" id="P54198">
    <property type="interactions" value="2557"/>
</dbReference>
<dbReference type="IntAct" id="P54198">
    <property type="interactions" value="90"/>
</dbReference>
<dbReference type="MINT" id="P54198"/>
<dbReference type="STRING" id="9606.ENSP00000263208"/>
<dbReference type="GlyCosmos" id="P54198">
    <property type="glycosylation" value="4 sites, 1 glycan"/>
</dbReference>
<dbReference type="GlyGen" id="P54198">
    <property type="glycosylation" value="6 sites, 1 O-linked glycan (5 sites)"/>
</dbReference>
<dbReference type="iPTMnet" id="P54198"/>
<dbReference type="PhosphoSitePlus" id="P54198"/>
<dbReference type="SwissPalm" id="P54198"/>
<dbReference type="BioMuta" id="HIRA"/>
<dbReference type="DMDM" id="88984228"/>
<dbReference type="jPOST" id="P54198"/>
<dbReference type="MassIVE" id="P54198"/>
<dbReference type="PaxDb" id="9606-ENSP00000263208"/>
<dbReference type="PeptideAtlas" id="P54198"/>
<dbReference type="ProteomicsDB" id="56652">
    <molecule id="P54198-1"/>
</dbReference>
<dbReference type="ProteomicsDB" id="56653">
    <molecule id="P54198-2"/>
</dbReference>
<dbReference type="Pumba" id="P54198"/>
<dbReference type="Antibodypedia" id="34961">
    <property type="antibodies" value="274 antibodies from 30 providers"/>
</dbReference>
<dbReference type="DNASU" id="7290"/>
<dbReference type="Ensembl" id="ENST00000263208.5">
    <molecule id="P54198-1"/>
    <property type="protein sequence ID" value="ENSP00000263208.5"/>
    <property type="gene ID" value="ENSG00000100084.14"/>
</dbReference>
<dbReference type="Ensembl" id="ENST00000340170.8">
    <molecule id="P54198-2"/>
    <property type="protein sequence ID" value="ENSP00000345350.4"/>
    <property type="gene ID" value="ENSG00000100084.14"/>
</dbReference>
<dbReference type="GeneID" id="7290"/>
<dbReference type="KEGG" id="hsa:7290"/>
<dbReference type="MANE-Select" id="ENST00000263208.5">
    <property type="protein sequence ID" value="ENSP00000263208.5"/>
    <property type="RefSeq nucleotide sequence ID" value="NM_003325.4"/>
    <property type="RefSeq protein sequence ID" value="NP_003316.3"/>
</dbReference>
<dbReference type="UCSC" id="uc002zpf.2">
    <molecule id="P54198-1"/>
    <property type="organism name" value="human"/>
</dbReference>
<dbReference type="AGR" id="HGNC:4916"/>
<dbReference type="CTD" id="7290"/>
<dbReference type="DisGeNET" id="7290"/>
<dbReference type="GeneCards" id="HIRA"/>
<dbReference type="HGNC" id="HGNC:4916">
    <property type="gene designation" value="HIRA"/>
</dbReference>
<dbReference type="HPA" id="ENSG00000100084">
    <property type="expression patterns" value="Tissue enhanced (thyroid)"/>
</dbReference>
<dbReference type="MalaCards" id="HIRA"/>
<dbReference type="MIM" id="600237">
    <property type="type" value="gene"/>
</dbReference>
<dbReference type="neXtProt" id="NX_P54198"/>
<dbReference type="OpenTargets" id="ENSG00000100084"/>
<dbReference type="Orphanet" id="567">
    <property type="disease" value="22q11.2 deletion syndrome"/>
</dbReference>
<dbReference type="PharmGKB" id="PA29293"/>
<dbReference type="VEuPathDB" id="HostDB:ENSG00000100084"/>
<dbReference type="eggNOG" id="KOG0973">
    <property type="taxonomic scope" value="Eukaryota"/>
</dbReference>
<dbReference type="GeneTree" id="ENSGT00550000074919"/>
<dbReference type="HOGENOM" id="CLU_004372_0_0_1"/>
<dbReference type="InParanoid" id="P54198"/>
<dbReference type="OMA" id="RGSWDGD"/>
<dbReference type="OrthoDB" id="1741719at2759"/>
<dbReference type="PAN-GO" id="P54198">
    <property type="GO annotations" value="3 GO annotations based on evolutionary models"/>
</dbReference>
<dbReference type="PhylomeDB" id="P54198"/>
<dbReference type="TreeFam" id="TF323161"/>
<dbReference type="PathwayCommons" id="P54198"/>
<dbReference type="Reactome" id="R-HSA-2559584">
    <property type="pathway name" value="Formation of Senescence-Associated Heterochromatin Foci (SAHF)"/>
</dbReference>
<dbReference type="Reactome" id="R-HSA-9821993">
    <property type="pathway name" value="Replacement of protamines by nucleosomes in the male pronucleus"/>
</dbReference>
<dbReference type="SignaLink" id="P54198"/>
<dbReference type="SIGNOR" id="P54198"/>
<dbReference type="BioGRID-ORCS" id="7290">
    <property type="hits" value="504 hits in 1179 CRISPR screens"/>
</dbReference>
<dbReference type="CD-CODE" id="B5B9A610">
    <property type="entry name" value="PML body"/>
</dbReference>
<dbReference type="ChiTaRS" id="HIRA">
    <property type="organism name" value="human"/>
</dbReference>
<dbReference type="EvolutionaryTrace" id="P54198"/>
<dbReference type="GeneWiki" id="HIRA"/>
<dbReference type="GenomeRNAi" id="7290"/>
<dbReference type="Pharos" id="P54198">
    <property type="development level" value="Tbio"/>
</dbReference>
<dbReference type="PRO" id="PR:P54198"/>
<dbReference type="Proteomes" id="UP000005640">
    <property type="component" value="Chromosome 22"/>
</dbReference>
<dbReference type="RNAct" id="P54198">
    <property type="molecule type" value="protein"/>
</dbReference>
<dbReference type="Bgee" id="ENSG00000100084">
    <property type="expression patterns" value="Expressed in left lobe of thyroid gland and 168 other cell types or tissues"/>
</dbReference>
<dbReference type="ExpressionAtlas" id="P54198">
    <property type="expression patterns" value="baseline and differential"/>
</dbReference>
<dbReference type="GO" id="GO:0000785">
    <property type="term" value="C:chromatin"/>
    <property type="evidence" value="ECO:0000314"/>
    <property type="project" value="UniProtKB"/>
</dbReference>
<dbReference type="GO" id="GO:0070062">
    <property type="term" value="C:extracellular exosome"/>
    <property type="evidence" value="ECO:0007005"/>
    <property type="project" value="UniProtKB"/>
</dbReference>
<dbReference type="GO" id="GO:0000417">
    <property type="term" value="C:HIR complex"/>
    <property type="evidence" value="ECO:0000318"/>
    <property type="project" value="GO_Central"/>
</dbReference>
<dbReference type="GO" id="GO:0005654">
    <property type="term" value="C:nucleoplasm"/>
    <property type="evidence" value="ECO:0000314"/>
    <property type="project" value="HPA"/>
</dbReference>
<dbReference type="GO" id="GO:0005634">
    <property type="term" value="C:nucleus"/>
    <property type="evidence" value="ECO:0000304"/>
    <property type="project" value="ProtInc"/>
</dbReference>
<dbReference type="GO" id="GO:0016605">
    <property type="term" value="C:PML body"/>
    <property type="evidence" value="ECO:0007669"/>
    <property type="project" value="UniProtKB-SubCell"/>
</dbReference>
<dbReference type="GO" id="GO:0032991">
    <property type="term" value="C:protein-containing complex"/>
    <property type="evidence" value="ECO:0000314"/>
    <property type="project" value="UniProtKB"/>
</dbReference>
<dbReference type="GO" id="GO:0042393">
    <property type="term" value="F:histone binding"/>
    <property type="evidence" value="ECO:0000314"/>
    <property type="project" value="ARUK-UCL"/>
</dbReference>
<dbReference type="GO" id="GO:0061629">
    <property type="term" value="F:RNA polymerase II-specific DNA-binding transcription factor binding"/>
    <property type="evidence" value="ECO:0000353"/>
    <property type="project" value="ARUK-UCL"/>
</dbReference>
<dbReference type="GO" id="GO:0003714">
    <property type="term" value="F:transcription corepressor activity"/>
    <property type="evidence" value="ECO:0000304"/>
    <property type="project" value="ProtInc"/>
</dbReference>
<dbReference type="GO" id="GO:0009653">
    <property type="term" value="P:anatomical structure morphogenesis"/>
    <property type="evidence" value="ECO:0000304"/>
    <property type="project" value="ProtInc"/>
</dbReference>
<dbReference type="GO" id="GO:0006338">
    <property type="term" value="P:chromatin remodeling"/>
    <property type="evidence" value="ECO:0000318"/>
    <property type="project" value="GO_Central"/>
</dbReference>
<dbReference type="GO" id="GO:0006351">
    <property type="term" value="P:DNA-templated transcription"/>
    <property type="evidence" value="ECO:0007669"/>
    <property type="project" value="InterPro"/>
</dbReference>
<dbReference type="GO" id="GO:0007369">
    <property type="term" value="P:gastrulation"/>
    <property type="evidence" value="ECO:0007669"/>
    <property type="project" value="Ensembl"/>
</dbReference>
<dbReference type="GO" id="GO:0042692">
    <property type="term" value="P:muscle cell differentiation"/>
    <property type="evidence" value="ECO:0007669"/>
    <property type="project" value="Ensembl"/>
</dbReference>
<dbReference type="GO" id="GO:0006334">
    <property type="term" value="P:nucleosome assembly"/>
    <property type="evidence" value="ECO:0000314"/>
    <property type="project" value="GO_Central"/>
</dbReference>
<dbReference type="GO" id="GO:0001649">
    <property type="term" value="P:osteoblast differentiation"/>
    <property type="evidence" value="ECO:0007669"/>
    <property type="project" value="Ensembl"/>
</dbReference>
<dbReference type="GO" id="GO:0006357">
    <property type="term" value="P:regulation of transcription by RNA polymerase II"/>
    <property type="evidence" value="ECO:0000304"/>
    <property type="project" value="ProtInc"/>
</dbReference>
<dbReference type="CDD" id="cd00200">
    <property type="entry name" value="WD40"/>
    <property type="match status" value="1"/>
</dbReference>
<dbReference type="FunFam" id="2.130.10.10:FF:000075">
    <property type="entry name" value="Protein HIRA"/>
    <property type="match status" value="1"/>
</dbReference>
<dbReference type="FunFam" id="2.130.10.10:FF:000105">
    <property type="entry name" value="Protein HIRA"/>
    <property type="match status" value="1"/>
</dbReference>
<dbReference type="Gene3D" id="2.130.10.10">
    <property type="entry name" value="YVTN repeat-like/Quinoprotein amine dehydrogenase"/>
    <property type="match status" value="2"/>
</dbReference>
<dbReference type="IDEAL" id="IID00154"/>
<dbReference type="InterPro" id="IPR055410">
    <property type="entry name" value="CAF1B_HIR1_beta-prop"/>
</dbReference>
<dbReference type="InterPro" id="IPR031120">
    <property type="entry name" value="HIR1-like"/>
</dbReference>
<dbReference type="InterPro" id="IPR011494">
    <property type="entry name" value="HIRA-like_C"/>
</dbReference>
<dbReference type="InterPro" id="IPR015943">
    <property type="entry name" value="WD40/YVTN_repeat-like_dom_sf"/>
</dbReference>
<dbReference type="InterPro" id="IPR036322">
    <property type="entry name" value="WD40_repeat_dom_sf"/>
</dbReference>
<dbReference type="InterPro" id="IPR001680">
    <property type="entry name" value="WD40_rpt"/>
</dbReference>
<dbReference type="PANTHER" id="PTHR13831">
    <property type="entry name" value="MEMBER OF THE HIR1 FAMILY OF WD-REPEAT PROTEINS"/>
    <property type="match status" value="1"/>
</dbReference>
<dbReference type="PANTHER" id="PTHR13831:SF0">
    <property type="entry name" value="PROTEIN HIRA"/>
    <property type="match status" value="1"/>
</dbReference>
<dbReference type="Pfam" id="PF24105">
    <property type="entry name" value="Beta-prop_CAF1B_HIR1"/>
    <property type="match status" value="1"/>
</dbReference>
<dbReference type="Pfam" id="PF07569">
    <property type="entry name" value="Hira"/>
    <property type="match status" value="1"/>
</dbReference>
<dbReference type="SMART" id="SM00320">
    <property type="entry name" value="WD40"/>
    <property type="match status" value="7"/>
</dbReference>
<dbReference type="SUPFAM" id="SSF50978">
    <property type="entry name" value="WD40 repeat-like"/>
    <property type="match status" value="1"/>
</dbReference>
<dbReference type="PROSITE" id="PS00678">
    <property type="entry name" value="WD_REPEATS_1"/>
    <property type="match status" value="1"/>
</dbReference>
<dbReference type="PROSITE" id="PS50082">
    <property type="entry name" value="WD_REPEATS_2"/>
    <property type="match status" value="3"/>
</dbReference>
<dbReference type="PROSITE" id="PS50294">
    <property type="entry name" value="WD_REPEATS_REGION"/>
    <property type="match status" value="1"/>
</dbReference>
<proteinExistence type="evidence at protein level"/>
<reference key="1">
    <citation type="journal article" date="1995" name="Hum. Mol. Genet.">
        <title>A human homolog of the S. cerevisiae HIR1 and HIR2 transcriptional repressors cloned from the DiGeorge syndrome critical region.</title>
        <authorList>
            <person name="Lamour V."/>
            <person name="Lecluse Y."/>
            <person name="Desmaze C."/>
            <person name="Spector M."/>
            <person name="Bodescot M."/>
            <person name="Aurias A."/>
            <person name="Osley M.A."/>
            <person name="Lipinski M."/>
        </authorList>
    </citation>
    <scope>NUCLEOTIDE SEQUENCE [MRNA] (ISOFORM LONG)</scope>
    <source>
        <tissue>Brain</tissue>
    </source>
</reference>
<reference key="2">
    <citation type="journal article" date="1996" name="Genome Res.">
        <title>Structural organization of the WD repeat protein-encoding gene HIRA in the DiGeorge syndrome critical region of human chromosome 22.</title>
        <authorList>
            <person name="Lorain S."/>
            <person name="Demczuk S."/>
            <person name="Lamour V."/>
            <person name="Toth S."/>
            <person name="Aurias A."/>
            <person name="Roe B.A."/>
            <person name="Lipinski M."/>
        </authorList>
    </citation>
    <scope>NUCLEOTIDE SEQUENCE [GENOMIC DNA / MRNA] (ISOFORM LONG)</scope>
</reference>
<reference key="3">
    <citation type="journal article" date="2004" name="Genome Biol.">
        <title>A genome annotation-driven approach to cloning the human ORFeome.</title>
        <authorList>
            <person name="Collins J.E."/>
            <person name="Wright C.L."/>
            <person name="Edwards C.A."/>
            <person name="Davis M.P."/>
            <person name="Grinham J.A."/>
            <person name="Cole C.G."/>
            <person name="Goward M.E."/>
            <person name="Aguado B."/>
            <person name="Mallya M."/>
            <person name="Mokrab Y."/>
            <person name="Huckle E.J."/>
            <person name="Beare D.M."/>
            <person name="Dunham I."/>
        </authorList>
    </citation>
    <scope>NUCLEOTIDE SEQUENCE [LARGE SCALE MRNA] (ISOFORM LONG)</scope>
</reference>
<reference key="4">
    <citation type="journal article" date="2004" name="Genome Res.">
        <title>The status, quality, and expansion of the NIH full-length cDNA project: the Mammalian Gene Collection (MGC).</title>
        <authorList>
            <consortium name="The MGC Project Team"/>
        </authorList>
    </citation>
    <scope>NUCLEOTIDE SEQUENCE [LARGE SCALE MRNA] (ISOFORM LONG)</scope>
    <source>
        <tissue>Eye</tissue>
        <tissue>Lymph</tissue>
    </source>
</reference>
<reference key="5">
    <citation type="journal article" date="1993" name="Hum. Mol. Genet.">
        <title>Isolation of a putative transcriptional regulator from the region of 22q11 deleted in DiGeorge syndrome, Shprintzen syndrome and familial congenital heart disease.</title>
        <authorList>
            <person name="Halford S."/>
            <person name="Wadey R."/>
            <person name="Roberts C."/>
            <person name="Daw S.C.M."/>
            <person name="Whiting J.A."/>
            <person name="O'Donnell H."/>
            <person name="Dunham I."/>
            <person name="Bentley D."/>
            <person name="Lindsay E."/>
            <person name="Baldini A."/>
            <person name="Francis F."/>
            <person name="Lehrach H."/>
            <person name="Williamson R."/>
            <person name="Wilson D.I."/>
            <person name="Goodship J."/>
            <person name="Cross I."/>
            <person name="Burn J."/>
            <person name="Scambler P.J."/>
        </authorList>
    </citation>
    <scope>NUCLEOTIDE SEQUENCE [MRNA] OF 45-1017 (ISOFORM SHORT)</scope>
    <source>
        <tissue>Fetal brain</tissue>
    </source>
</reference>
<reference key="6">
    <citation type="journal article" date="1997" name="Hum. Mol. Genet.">
        <title>The murine homologue of HIRA, a DiGeorge syndrome candidate gene, is expressed in embryonic structures affected in human CATCH22 patients.</title>
        <authorList>
            <person name="Wilming L.G."/>
            <person name="Snoeren C.A.S."/>
            <person name="van Rijswijk A."/>
            <person name="Grosveld F."/>
            <person name="Meijers C."/>
        </authorList>
    </citation>
    <scope>TISSUE SPECIFICITY</scope>
</reference>
<reference key="7">
    <citation type="journal article" date="1998" name="Mol. Cell. Biol.">
        <title>Core histones and HIRIP3, a novel histone-binding protein, directly interact with WD repeat protein HIRA.</title>
        <authorList>
            <person name="Lorain S."/>
            <person name="Quivy J.-P."/>
            <person name="Monier-Gavelle F."/>
            <person name="Scamps C."/>
            <person name="Lecluse Y."/>
            <person name="Almouzni G."/>
            <person name="Lipinski M."/>
        </authorList>
    </citation>
    <scope>INTERACTION WITH HIRIP3; HISTONE H2B; HISTONE H4 AND NFU1</scope>
    <scope>SUBCELLULAR LOCATION</scope>
</reference>
<reference key="8">
    <citation type="journal article" date="2001" name="Mol. Cell. Biol.">
        <title>HIRA, the human homologue of yeast Hir1p and Hir2p, is a novel cyclin-cdk2 substrate whose expression blocks S-phase progression.</title>
        <authorList>
            <person name="Hall C."/>
            <person name="Nelson D.M."/>
            <person name="Ye X."/>
            <person name="Baker K."/>
            <person name="DeCaprio J.A."/>
            <person name="Seeholzer S."/>
            <person name="Lipinski M."/>
            <person name="Adams P.D."/>
        </authorList>
    </citation>
    <scope>INTERACTION WITH CCNA1</scope>
    <scope>SUBCELLULAR LOCATION</scope>
    <scope>PHOSPHORYLATION AT THR-555 AND SER-687</scope>
    <scope>MUTAGENESIS OF THR-555 AND 628-LYS--LEU-631</scope>
</reference>
<reference key="9">
    <citation type="journal article" date="2002" name="Mol. Cell. Biol.">
        <title>Coupling of DNA synthesis and histone synthesis in S phase independent of cyclin/cdk2 activity.</title>
        <authorList>
            <person name="Nelson D.M."/>
            <person name="Ye X."/>
            <person name="Hall C."/>
            <person name="Santos H."/>
            <person name="Ma T."/>
            <person name="Kao G.D."/>
            <person name="Yen T.J."/>
            <person name="Harper J.W."/>
            <person name="Adams P.D."/>
        </authorList>
    </citation>
    <scope>FUNCTION</scope>
    <scope>SUBCELLULAR LOCATION</scope>
</reference>
<reference key="10">
    <citation type="journal article" date="2003" name="Curr. Biol.">
        <title>Structure and function of the conserved core of histone deposition protein Asf1.</title>
        <authorList>
            <person name="Daganzo S.M."/>
            <person name="Erzberger J.P."/>
            <person name="Lam W.M."/>
            <person name="Skordalakes E."/>
            <person name="Zhang R."/>
            <person name="Franco A.A."/>
            <person name="Brill S.J."/>
            <person name="Adams P.D."/>
            <person name="Berger J.M."/>
            <person name="Kaufman P.D."/>
        </authorList>
    </citation>
    <scope>INTERACTION WITH ASF1A</scope>
</reference>
<reference key="11">
    <citation type="journal article" date="2004" name="Cell">
        <title>Histone H3.1 and H3.3 complexes mediate nucleosome assembly pathways dependent or independent of DNA synthesis.</title>
        <authorList>
            <person name="Tagami H."/>
            <person name="Ray-Gallet D."/>
            <person name="Almouzni G."/>
            <person name="Nakatani Y."/>
        </authorList>
    </citation>
    <scope>FUNCTION</scope>
    <scope>IDENTIFICATION BY MASS SPECTROMETRY</scope>
    <scope>IDENTIFICATION IN A COMPLEX WITH ASF1A; CABIN1; HISTONE H3.3 AND UBN1</scope>
</reference>
<reference key="12">
    <citation type="journal article" date="2005" name="Dev. Cell">
        <title>Formation of MacroH2A-containing senescence-associated heterochromatin foci and senescence driven by ASF1a and HIRA.</title>
        <authorList>
            <person name="Zhang R."/>
            <person name="Poustovoitov M.V."/>
            <person name="Ye X."/>
            <person name="Santos H.A."/>
            <person name="Chen W."/>
            <person name="Daganzo S.M."/>
            <person name="Erzberger J.P."/>
            <person name="Serebriiskii I.G."/>
            <person name="Canutescu A.A."/>
            <person name="Dunbrack R.L."/>
            <person name="Pehrson J.R."/>
            <person name="Berger J.M."/>
            <person name="Kaufman P.D."/>
            <person name="Adams P.D."/>
        </authorList>
    </citation>
    <scope>FUNCTION</scope>
    <scope>INTERACTION WITH ASF1A</scope>
    <scope>SUBCELLULAR LOCATION</scope>
</reference>
<reference key="13">
    <citation type="journal article" date="2005" name="J. Biol. Chem.">
        <title>Systematic identification and analysis of mammalian small ubiquitin-like modifier substrates.</title>
        <authorList>
            <person name="Gocke C.B."/>
            <person name="Yu H."/>
            <person name="Kang J."/>
        </authorList>
    </citation>
    <scope>SUMOYLATION</scope>
</reference>
<reference key="14">
    <citation type="journal article" date="2008" name="Proc. Natl. Acad. Sci. U.S.A.">
        <title>A quantitative atlas of mitotic phosphorylation.</title>
        <authorList>
            <person name="Dephoure N."/>
            <person name="Zhou C."/>
            <person name="Villen J."/>
            <person name="Beausoleil S.A."/>
            <person name="Bakalarski C.E."/>
            <person name="Elledge S.J."/>
            <person name="Gygi S.P."/>
        </authorList>
    </citation>
    <scope>PHOSPHORYLATION [LARGE SCALE ANALYSIS] AT SER-584 AND THR-586</scope>
    <scope>IDENTIFICATION BY MASS SPECTROMETRY [LARGE SCALE ANALYSIS]</scope>
    <source>
        <tissue>Cervix carcinoma</tissue>
    </source>
</reference>
<reference key="15">
    <citation type="journal article" date="2009" name="Anal. Chem.">
        <title>Lys-N and trypsin cover complementary parts of the phosphoproteome in a refined SCX-based approach.</title>
        <authorList>
            <person name="Gauci S."/>
            <person name="Helbig A.O."/>
            <person name="Slijper M."/>
            <person name="Krijgsveld J."/>
            <person name="Heck A.J."/>
            <person name="Mohammed S."/>
        </authorList>
    </citation>
    <scope>IDENTIFICATION BY MASS SPECTROMETRY [LARGE SCALE ANALYSIS]</scope>
</reference>
<reference key="16">
    <citation type="journal article" date="2009" name="Mol. Cell. Biol.">
        <title>Human UBN1 is an ortholog of yeast Hpc2p and has an essential role in the HIRA/ASF1a chromatin-remodeling pathway in senescent cells.</title>
        <authorList>
            <person name="Banumathy G."/>
            <person name="Somaiah N."/>
            <person name="Zhang R."/>
            <person name="Tang Y."/>
            <person name="Hoffmann J."/>
            <person name="Andrake M."/>
            <person name="Ceulemans H."/>
            <person name="Schultz D."/>
            <person name="Marmorstein R."/>
            <person name="Adams P.D."/>
        </authorList>
    </citation>
    <scope>INTERACTION WITH UBN1</scope>
</reference>
<reference key="17">
    <citation type="journal article" date="2009" name="Sci. Signal.">
        <title>Quantitative phosphoproteomic analysis of T cell receptor signaling reveals system-wide modulation of protein-protein interactions.</title>
        <authorList>
            <person name="Mayya V."/>
            <person name="Lundgren D.H."/>
            <person name="Hwang S.-I."/>
            <person name="Rezaul K."/>
            <person name="Wu L."/>
            <person name="Eng J.K."/>
            <person name="Rodionov V."/>
            <person name="Han D.K."/>
        </authorList>
    </citation>
    <scope>PHOSPHORYLATION [LARGE SCALE ANALYSIS] AT SER-549; SER-557; THR-576 AND THR-586</scope>
    <scope>IDENTIFICATION BY MASS SPECTROMETRY [LARGE SCALE ANALYSIS]</scope>
    <source>
        <tissue>Leukemic T-cell</tissue>
    </source>
</reference>
<reference key="18">
    <citation type="journal article" date="2010" name="Sci. Signal.">
        <title>Quantitative phosphoproteomics reveals widespread full phosphorylation site occupancy during mitosis.</title>
        <authorList>
            <person name="Olsen J.V."/>
            <person name="Vermeulen M."/>
            <person name="Santamaria A."/>
            <person name="Kumar C."/>
            <person name="Miller M.L."/>
            <person name="Jensen L.J."/>
            <person name="Gnad F."/>
            <person name="Cox J."/>
            <person name="Jensen T.S."/>
            <person name="Nigg E.A."/>
            <person name="Brunak S."/>
            <person name="Mann M."/>
        </authorList>
    </citation>
    <scope>PHOSPHORYLATION [LARGE SCALE ANALYSIS] AT THR-586 AND SER-661</scope>
    <scope>IDENTIFICATION BY MASS SPECTROMETRY [LARGE SCALE ANALYSIS]</scope>
    <source>
        <tissue>Cervix carcinoma</tissue>
    </source>
</reference>
<reference key="19">
    <citation type="journal article" date="2011" name="Sci. Signal.">
        <title>System-wide temporal characterization of the proteome and phosphoproteome of human embryonic stem cell differentiation.</title>
        <authorList>
            <person name="Rigbolt K.T."/>
            <person name="Prokhorova T.A."/>
            <person name="Akimov V."/>
            <person name="Henningsen J."/>
            <person name="Johansen P.T."/>
            <person name="Kratchmarova I."/>
            <person name="Kassem M."/>
            <person name="Mann M."/>
            <person name="Olsen J.V."/>
            <person name="Blagoev B."/>
        </authorList>
    </citation>
    <scope>PHOSPHORYLATION [LARGE SCALE ANALYSIS] AT SER-610; SER-611; SER-612; SER-614 AND SER-661</scope>
    <scope>IDENTIFICATION BY MASS SPECTROMETRY [LARGE SCALE ANALYSIS]</scope>
</reference>
<reference key="20">
    <citation type="journal article" date="2013" name="J. Proteome Res.">
        <title>Toward a comprehensive characterization of a human cancer cell phosphoproteome.</title>
        <authorList>
            <person name="Zhou H."/>
            <person name="Di Palma S."/>
            <person name="Preisinger C."/>
            <person name="Peng M."/>
            <person name="Polat A.N."/>
            <person name="Heck A.J."/>
            <person name="Mohammed S."/>
        </authorList>
    </citation>
    <scope>PHOSPHORYLATION [LARGE SCALE ANALYSIS] AT SER-111; SER-549; SER-584; THR-586; SER-612; SER-661 AND SER-675</scope>
    <scope>IDENTIFICATION BY MASS SPECTROMETRY [LARGE SCALE ANALYSIS]</scope>
    <source>
        <tissue>Cervix carcinoma</tissue>
        <tissue>Erythroleukemia</tissue>
    </source>
</reference>
<reference key="21">
    <citation type="journal article" date="2017" name="Nucleic Acids Res.">
        <title>H3.Y discriminates between HIRA and DAXX chaperone complexes and reveals unexpected insights into human DAXX-H3.3-H4 binding and deposition requirements.</title>
        <authorList>
            <person name="Zink L.M."/>
            <person name="Delbarre E."/>
            <person name="Eberl H.C."/>
            <person name="Keilhauer E.C."/>
            <person name="Boenisch C."/>
            <person name="Puenzeler S."/>
            <person name="Bartkuhn M."/>
            <person name="Collas P."/>
            <person name="Mann M."/>
            <person name="Hake S.B."/>
        </authorList>
    </citation>
    <scope>INTERACTION WITH H3.Y</scope>
</reference>
<reference key="22">
    <citation type="journal article" date="2006" name="Nat. Struct. Mol. Biol.">
        <title>Structure of a human ASF1a-HIRA complex and insights into specificity of histone chaperone complex assembly.</title>
        <authorList>
            <person name="Tang Y."/>
            <person name="Poustovoitov M.V."/>
            <person name="Zhao K."/>
            <person name="Garfinkel M."/>
            <person name="Canutescu A."/>
            <person name="Dunbrack R."/>
            <person name="Adams P.D."/>
            <person name="Marmorstein R."/>
        </authorList>
    </citation>
    <scope>X-RAY CRYSTALLOGRAPHY (2.7 ANGSTROMS) OF 425-472 IN COMPLEX WITH ASF1A</scope>
    <scope>MUTAGENESIS OF 449-GLN--ARG-458; 459-ARG--GLN-468; ARG-459; ARG-460; ILE-461; LEU-464 AND ILE-466</scope>
</reference>